<comment type="function">
    <text evidence="1">NQR complex catalyzes the reduction of ubiquinone-1 to ubiquinol by two successive reactions, coupled with the transport of Na(+) ions from the cytoplasm to the periplasm. NqrA to NqrE are probably involved in the second step, the conversion of ubisemiquinone to ubiquinol.</text>
</comment>
<comment type="catalytic activity">
    <reaction evidence="1">
        <text>a ubiquinone + n Na(+)(in) + NADH + H(+) = a ubiquinol + n Na(+)(out) + NAD(+)</text>
        <dbReference type="Rhea" id="RHEA:47748"/>
        <dbReference type="Rhea" id="RHEA-COMP:9565"/>
        <dbReference type="Rhea" id="RHEA-COMP:9566"/>
        <dbReference type="ChEBI" id="CHEBI:15378"/>
        <dbReference type="ChEBI" id="CHEBI:16389"/>
        <dbReference type="ChEBI" id="CHEBI:17976"/>
        <dbReference type="ChEBI" id="CHEBI:29101"/>
        <dbReference type="ChEBI" id="CHEBI:57540"/>
        <dbReference type="ChEBI" id="CHEBI:57945"/>
        <dbReference type="EC" id="7.2.1.1"/>
    </reaction>
</comment>
<comment type="subunit">
    <text evidence="1">Composed of six subunits; NqrA, NqrB, NqrC, NqrD, NqrE and NqrF.</text>
</comment>
<comment type="subcellular location">
    <subcellularLocation>
        <location evidence="1">Cell inner membrane</location>
        <topology evidence="1">Multi-pass membrane protein</topology>
    </subcellularLocation>
</comment>
<comment type="similarity">
    <text evidence="1">Belongs to the NqrDE/RnfAE family.</text>
</comment>
<protein>
    <recommendedName>
        <fullName evidence="1">Na(+)-translocating NADH-quinone reductase subunit E</fullName>
        <shortName evidence="1">Na(+)-NQR subunit E</shortName>
        <shortName evidence="1">Na(+)-translocating NQR subunit E</shortName>
        <ecNumber evidence="1">7.2.1.1</ecNumber>
    </recommendedName>
    <alternativeName>
        <fullName evidence="1">NQR complex subunit E</fullName>
    </alternativeName>
    <alternativeName>
        <fullName evidence="1">NQR-1 subunit E</fullName>
    </alternativeName>
</protein>
<keyword id="KW-0997">Cell inner membrane</keyword>
<keyword id="KW-1003">Cell membrane</keyword>
<keyword id="KW-0406">Ion transport</keyword>
<keyword id="KW-0472">Membrane</keyword>
<keyword id="KW-0520">NAD</keyword>
<keyword id="KW-1185">Reference proteome</keyword>
<keyword id="KW-0915">Sodium</keyword>
<keyword id="KW-0739">Sodium transport</keyword>
<keyword id="KW-1278">Translocase</keyword>
<keyword id="KW-0812">Transmembrane</keyword>
<keyword id="KW-1133">Transmembrane helix</keyword>
<keyword id="KW-0813">Transport</keyword>
<keyword id="KW-0830">Ubiquinone</keyword>
<proteinExistence type="inferred from homology"/>
<organism>
    <name type="scientific">Saccharophagus degradans (strain 2-40 / ATCC 43961 / DSM 17024)</name>
    <dbReference type="NCBI Taxonomy" id="203122"/>
    <lineage>
        <taxon>Bacteria</taxon>
        <taxon>Pseudomonadati</taxon>
        <taxon>Pseudomonadota</taxon>
        <taxon>Gammaproteobacteria</taxon>
        <taxon>Cellvibrionales</taxon>
        <taxon>Cellvibrionaceae</taxon>
        <taxon>Saccharophagus</taxon>
    </lineage>
</organism>
<gene>
    <name evidence="1" type="primary">nqrE</name>
    <name type="ordered locus">Sde_1801</name>
</gene>
<dbReference type="EC" id="7.2.1.1" evidence="1"/>
<dbReference type="EMBL" id="CP000282">
    <property type="protein sequence ID" value="ABD81061.1"/>
    <property type="molecule type" value="Genomic_DNA"/>
</dbReference>
<dbReference type="RefSeq" id="WP_011468281.1">
    <property type="nucleotide sequence ID" value="NC_007912.1"/>
</dbReference>
<dbReference type="SMR" id="Q21JR8"/>
<dbReference type="STRING" id="203122.Sde_1801"/>
<dbReference type="GeneID" id="98613473"/>
<dbReference type="KEGG" id="sde:Sde_1801"/>
<dbReference type="eggNOG" id="COG2209">
    <property type="taxonomic scope" value="Bacteria"/>
</dbReference>
<dbReference type="HOGENOM" id="CLU_095255_0_0_6"/>
<dbReference type="OrthoDB" id="9803631at2"/>
<dbReference type="Proteomes" id="UP000001947">
    <property type="component" value="Chromosome"/>
</dbReference>
<dbReference type="GO" id="GO:0009276">
    <property type="term" value="C:Gram-negative-bacterium-type cell wall"/>
    <property type="evidence" value="ECO:0007669"/>
    <property type="project" value="InterPro"/>
</dbReference>
<dbReference type="GO" id="GO:0005886">
    <property type="term" value="C:plasma membrane"/>
    <property type="evidence" value="ECO:0007669"/>
    <property type="project" value="UniProtKB-SubCell"/>
</dbReference>
<dbReference type="GO" id="GO:0016655">
    <property type="term" value="F:oxidoreductase activity, acting on NAD(P)H, quinone or similar compound as acceptor"/>
    <property type="evidence" value="ECO:0007669"/>
    <property type="project" value="UniProtKB-UniRule"/>
</dbReference>
<dbReference type="GO" id="GO:0022904">
    <property type="term" value="P:respiratory electron transport chain"/>
    <property type="evidence" value="ECO:0007669"/>
    <property type="project" value="InterPro"/>
</dbReference>
<dbReference type="GO" id="GO:0006814">
    <property type="term" value="P:sodium ion transport"/>
    <property type="evidence" value="ECO:0007669"/>
    <property type="project" value="UniProtKB-UniRule"/>
</dbReference>
<dbReference type="HAMAP" id="MF_00429">
    <property type="entry name" value="NqrE"/>
    <property type="match status" value="1"/>
</dbReference>
<dbReference type="InterPro" id="IPR003667">
    <property type="entry name" value="NqrDE/RnfAE"/>
</dbReference>
<dbReference type="InterPro" id="IPR050133">
    <property type="entry name" value="NqrDE/RnfAE_oxidrdctase"/>
</dbReference>
<dbReference type="InterPro" id="IPR010967">
    <property type="entry name" value="NqrE"/>
</dbReference>
<dbReference type="NCBIfam" id="TIGR01940">
    <property type="entry name" value="nqrE"/>
    <property type="match status" value="1"/>
</dbReference>
<dbReference type="PANTHER" id="PTHR30335">
    <property type="entry name" value="INTEGRAL MEMBRANE PROTEIN OF SOXR-REDUCING COMPLEX"/>
    <property type="match status" value="1"/>
</dbReference>
<dbReference type="PANTHER" id="PTHR30335:SF1">
    <property type="entry name" value="NA(+)-TRANSLOCATING NADH-QUINONE REDUCTASE SUBUNIT E"/>
    <property type="match status" value="1"/>
</dbReference>
<dbReference type="Pfam" id="PF02508">
    <property type="entry name" value="Rnf-Nqr"/>
    <property type="match status" value="1"/>
</dbReference>
<dbReference type="PIRSF" id="PIRSF006102">
    <property type="entry name" value="NQR_DE"/>
    <property type="match status" value="1"/>
</dbReference>
<accession>Q21JR8</accession>
<evidence type="ECO:0000255" key="1">
    <source>
        <dbReference type="HAMAP-Rule" id="MF_00429"/>
    </source>
</evidence>
<feature type="chain" id="PRO_1000060215" description="Na(+)-translocating NADH-quinone reductase subunit E">
    <location>
        <begin position="1"/>
        <end position="202"/>
    </location>
</feature>
<feature type="transmembrane region" description="Helical" evidence="1">
    <location>
        <begin position="11"/>
        <end position="31"/>
    </location>
</feature>
<feature type="transmembrane region" description="Helical" evidence="1">
    <location>
        <begin position="35"/>
        <end position="55"/>
    </location>
</feature>
<feature type="transmembrane region" description="Helical" evidence="1">
    <location>
        <begin position="81"/>
        <end position="101"/>
    </location>
</feature>
<feature type="transmembrane region" description="Helical" evidence="1">
    <location>
        <begin position="114"/>
        <end position="134"/>
    </location>
</feature>
<feature type="transmembrane region" description="Helical" evidence="1">
    <location>
        <begin position="144"/>
        <end position="164"/>
    </location>
</feature>
<feature type="transmembrane region" description="Helical" evidence="1">
    <location>
        <begin position="182"/>
        <end position="202"/>
    </location>
</feature>
<name>NQRE_SACD2</name>
<reference key="1">
    <citation type="journal article" date="2008" name="PLoS Genet.">
        <title>Complete genome sequence of the complex carbohydrate-degrading marine bacterium, Saccharophagus degradans strain 2-40 T.</title>
        <authorList>
            <person name="Weiner R.M."/>
            <person name="Taylor L.E. II"/>
            <person name="Henrissat B."/>
            <person name="Hauser L."/>
            <person name="Land M."/>
            <person name="Coutinho P.M."/>
            <person name="Rancurel C."/>
            <person name="Saunders E.H."/>
            <person name="Longmire A.G."/>
            <person name="Zhang H."/>
            <person name="Bayer E.A."/>
            <person name="Gilbert H.J."/>
            <person name="Larimer F."/>
            <person name="Zhulin I.B."/>
            <person name="Ekborg N.A."/>
            <person name="Lamed R."/>
            <person name="Richardson P.M."/>
            <person name="Borovok I."/>
            <person name="Hutcheson S."/>
        </authorList>
    </citation>
    <scope>NUCLEOTIDE SEQUENCE [LARGE SCALE GENOMIC DNA]</scope>
    <source>
        <strain>2-40 / ATCC 43961 / DSM 17024</strain>
    </source>
</reference>
<sequence>MEALLSIFVESVFVKNMALAYFLGMCTFLAISKKIDAAIGLGIAVVVVLTITVPVNNLMFNYLLADGALAWAGLEGVDLSFLGLICYIGVIAAIVQIMEMVLDKYFPALYGALGVFLPLITVNCAILGAALLMVQREYTFSESVVFGVGSGVGWAFAIVALAGIREKLKYSDVPEGLRGLGITFITVGLMSLGFMSFGGIAL</sequence>